<evidence type="ECO:0000255" key="1">
    <source>
        <dbReference type="HAMAP-Rule" id="MF_00563"/>
    </source>
</evidence>
<proteinExistence type="inferred from homology"/>
<protein>
    <recommendedName>
        <fullName evidence="1">Adenosylhomocysteinase</fullName>
        <ecNumber evidence="1">3.13.2.1</ecNumber>
    </recommendedName>
    <alternativeName>
        <fullName evidence="1">S-adenosyl-L-homocysteine hydrolase</fullName>
        <shortName evidence="1">AdoHcyase</shortName>
    </alternativeName>
</protein>
<keyword id="KW-0963">Cytoplasm</keyword>
<keyword id="KW-0378">Hydrolase</keyword>
<keyword id="KW-0520">NAD</keyword>
<keyword id="KW-0554">One-carbon metabolism</keyword>
<keyword id="KW-1185">Reference proteome</keyword>
<feature type="chain" id="PRO_1000196674" description="Adenosylhomocysteinase">
    <location>
        <begin position="1"/>
        <end position="466"/>
    </location>
</feature>
<feature type="binding site" evidence="1">
    <location>
        <position position="57"/>
    </location>
    <ligand>
        <name>substrate</name>
    </ligand>
</feature>
<feature type="binding site" evidence="1">
    <location>
        <position position="132"/>
    </location>
    <ligand>
        <name>substrate</name>
    </ligand>
</feature>
<feature type="binding site" evidence="1">
    <location>
        <position position="192"/>
    </location>
    <ligand>
        <name>substrate</name>
    </ligand>
</feature>
<feature type="binding site" evidence="1">
    <location>
        <begin position="193"/>
        <end position="195"/>
    </location>
    <ligand>
        <name>NAD(+)</name>
        <dbReference type="ChEBI" id="CHEBI:57540"/>
    </ligand>
</feature>
<feature type="binding site" evidence="1">
    <location>
        <position position="222"/>
    </location>
    <ligand>
        <name>substrate</name>
    </ligand>
</feature>
<feature type="binding site" evidence="1">
    <location>
        <position position="226"/>
    </location>
    <ligand>
        <name>substrate</name>
    </ligand>
</feature>
<feature type="binding site" evidence="1">
    <location>
        <position position="227"/>
    </location>
    <ligand>
        <name>NAD(+)</name>
        <dbReference type="ChEBI" id="CHEBI:57540"/>
    </ligand>
</feature>
<feature type="binding site" evidence="1">
    <location>
        <begin position="256"/>
        <end position="261"/>
    </location>
    <ligand>
        <name>NAD(+)</name>
        <dbReference type="ChEBI" id="CHEBI:57540"/>
    </ligand>
</feature>
<feature type="binding site" evidence="1">
    <location>
        <position position="279"/>
    </location>
    <ligand>
        <name>NAD(+)</name>
        <dbReference type="ChEBI" id="CHEBI:57540"/>
    </ligand>
</feature>
<feature type="binding site" evidence="1">
    <location>
        <position position="314"/>
    </location>
    <ligand>
        <name>NAD(+)</name>
        <dbReference type="ChEBI" id="CHEBI:57540"/>
    </ligand>
</feature>
<feature type="binding site" evidence="1">
    <location>
        <begin position="335"/>
        <end position="337"/>
    </location>
    <ligand>
        <name>NAD(+)</name>
        <dbReference type="ChEBI" id="CHEBI:57540"/>
    </ligand>
</feature>
<feature type="binding site" evidence="1">
    <location>
        <position position="380"/>
    </location>
    <ligand>
        <name>NAD(+)</name>
        <dbReference type="ChEBI" id="CHEBI:57540"/>
    </ligand>
</feature>
<name>SAHH_RHIEC</name>
<gene>
    <name evidence="1" type="primary">ahcY</name>
    <name type="ordered locus">RHE_CH00031</name>
</gene>
<dbReference type="EC" id="3.13.2.1" evidence="1"/>
<dbReference type="EMBL" id="CP000133">
    <property type="protein sequence ID" value="ABC88864.1"/>
    <property type="molecule type" value="Genomic_DNA"/>
</dbReference>
<dbReference type="RefSeq" id="WP_011423435.1">
    <property type="nucleotide sequence ID" value="NC_007761.1"/>
</dbReference>
<dbReference type="SMR" id="Q2KE72"/>
<dbReference type="KEGG" id="ret:RHE_CH00031"/>
<dbReference type="eggNOG" id="COG0499">
    <property type="taxonomic scope" value="Bacteria"/>
</dbReference>
<dbReference type="HOGENOM" id="CLU_025194_2_1_5"/>
<dbReference type="OrthoDB" id="9802717at2"/>
<dbReference type="UniPathway" id="UPA00314">
    <property type="reaction ID" value="UER00076"/>
</dbReference>
<dbReference type="Proteomes" id="UP000001936">
    <property type="component" value="Chromosome"/>
</dbReference>
<dbReference type="GO" id="GO:0005829">
    <property type="term" value="C:cytosol"/>
    <property type="evidence" value="ECO:0007669"/>
    <property type="project" value="TreeGrafter"/>
</dbReference>
<dbReference type="GO" id="GO:0004013">
    <property type="term" value="F:adenosylhomocysteinase activity"/>
    <property type="evidence" value="ECO:0007669"/>
    <property type="project" value="UniProtKB-UniRule"/>
</dbReference>
<dbReference type="GO" id="GO:0071269">
    <property type="term" value="P:L-homocysteine biosynthetic process"/>
    <property type="evidence" value="ECO:0007669"/>
    <property type="project" value="UniProtKB-UniRule"/>
</dbReference>
<dbReference type="GO" id="GO:0006730">
    <property type="term" value="P:one-carbon metabolic process"/>
    <property type="evidence" value="ECO:0007669"/>
    <property type="project" value="UniProtKB-KW"/>
</dbReference>
<dbReference type="GO" id="GO:0033353">
    <property type="term" value="P:S-adenosylmethionine cycle"/>
    <property type="evidence" value="ECO:0007669"/>
    <property type="project" value="TreeGrafter"/>
</dbReference>
<dbReference type="CDD" id="cd00401">
    <property type="entry name" value="SAHH"/>
    <property type="match status" value="1"/>
</dbReference>
<dbReference type="FunFam" id="3.40.50.720:FF:000004">
    <property type="entry name" value="Adenosylhomocysteinase"/>
    <property type="match status" value="1"/>
</dbReference>
<dbReference type="Gene3D" id="3.40.50.1480">
    <property type="entry name" value="Adenosylhomocysteinase-like"/>
    <property type="match status" value="1"/>
</dbReference>
<dbReference type="Gene3D" id="3.40.50.720">
    <property type="entry name" value="NAD(P)-binding Rossmann-like Domain"/>
    <property type="match status" value="1"/>
</dbReference>
<dbReference type="HAMAP" id="MF_00563">
    <property type="entry name" value="AdoHcyase"/>
    <property type="match status" value="1"/>
</dbReference>
<dbReference type="InterPro" id="IPR042172">
    <property type="entry name" value="Adenosylhomocyst_ase-like_sf"/>
</dbReference>
<dbReference type="InterPro" id="IPR000043">
    <property type="entry name" value="Adenosylhomocysteinase-like"/>
</dbReference>
<dbReference type="InterPro" id="IPR015878">
    <property type="entry name" value="Ado_hCys_hydrolase_NAD-bd"/>
</dbReference>
<dbReference type="InterPro" id="IPR036291">
    <property type="entry name" value="NAD(P)-bd_dom_sf"/>
</dbReference>
<dbReference type="InterPro" id="IPR020082">
    <property type="entry name" value="S-Ado-L-homoCys_hydrolase_CS"/>
</dbReference>
<dbReference type="NCBIfam" id="TIGR00936">
    <property type="entry name" value="ahcY"/>
    <property type="match status" value="1"/>
</dbReference>
<dbReference type="NCBIfam" id="NF004005">
    <property type="entry name" value="PRK05476.2-3"/>
    <property type="match status" value="1"/>
</dbReference>
<dbReference type="PANTHER" id="PTHR23420">
    <property type="entry name" value="ADENOSYLHOMOCYSTEINASE"/>
    <property type="match status" value="1"/>
</dbReference>
<dbReference type="PANTHER" id="PTHR23420:SF0">
    <property type="entry name" value="ADENOSYLHOMOCYSTEINASE"/>
    <property type="match status" value="1"/>
</dbReference>
<dbReference type="Pfam" id="PF05221">
    <property type="entry name" value="AdoHcyase"/>
    <property type="match status" value="1"/>
</dbReference>
<dbReference type="Pfam" id="PF00670">
    <property type="entry name" value="AdoHcyase_NAD"/>
    <property type="match status" value="1"/>
</dbReference>
<dbReference type="PIRSF" id="PIRSF001109">
    <property type="entry name" value="Ad_hcy_hydrolase"/>
    <property type="match status" value="1"/>
</dbReference>
<dbReference type="SMART" id="SM00996">
    <property type="entry name" value="AdoHcyase"/>
    <property type="match status" value="1"/>
</dbReference>
<dbReference type="SMART" id="SM00997">
    <property type="entry name" value="AdoHcyase_NAD"/>
    <property type="match status" value="1"/>
</dbReference>
<dbReference type="SUPFAM" id="SSF52283">
    <property type="entry name" value="Formate/glycerate dehydrogenase catalytic domain-like"/>
    <property type="match status" value="1"/>
</dbReference>
<dbReference type="SUPFAM" id="SSF51735">
    <property type="entry name" value="NAD(P)-binding Rossmann-fold domains"/>
    <property type="match status" value="1"/>
</dbReference>
<dbReference type="PROSITE" id="PS00738">
    <property type="entry name" value="ADOHCYASE_1"/>
    <property type="match status" value="1"/>
</dbReference>
<dbReference type="PROSITE" id="PS00739">
    <property type="entry name" value="ADOHCYASE_2"/>
    <property type="match status" value="1"/>
</dbReference>
<accession>Q2KE72</accession>
<sequence length="466" mass="50727">MSTEKDYVVADIGLADFGRKEITIAETEMPGLMSCRAEFGEAKPLKGARITGSLHMTIQTAVLIETLVALGAEVRWASCNIFSTQDHAAAAIAAAGVPVFAIKGESLEDYWVYTDKIFQWADGGLSNMILDDGGDATMYILLGARAEAGEDVLSNPHSEEEEILFAQIKKRLAASPGWFTKQRDAIKGVTEETTTGVNRLYQLSQKGLLPFPAINVNDSVTKSKFDNKYGCKESLVDGIRRGTDVMMAGKVAVVCGYGDVGKGSAASLSGAGARVKVTEADPICALQAAMDGYEVVLLEDVVSSADIFITTTGNKDVIRIDHMRQMKDMAIVGNIGHFDNEIEVAALRNLKWTNVKPQVDLIEFPKGNRIILLSEGRLLNLGNATGHPSFVMSASFTNQTLAQIELFTKPGQYENKVYILPKHLDEKVARLHLDKLGVKLTQLSEEQAAYIGVKPQGPFKSDHYRY</sequence>
<organism>
    <name type="scientific">Rhizobium etli (strain ATCC 51251 / DSM 11541 / JCM 21823 / NBRC 15573 / CFN 42)</name>
    <dbReference type="NCBI Taxonomy" id="347834"/>
    <lineage>
        <taxon>Bacteria</taxon>
        <taxon>Pseudomonadati</taxon>
        <taxon>Pseudomonadota</taxon>
        <taxon>Alphaproteobacteria</taxon>
        <taxon>Hyphomicrobiales</taxon>
        <taxon>Rhizobiaceae</taxon>
        <taxon>Rhizobium/Agrobacterium group</taxon>
        <taxon>Rhizobium</taxon>
    </lineage>
</organism>
<comment type="function">
    <text evidence="1">May play a key role in the regulation of the intracellular concentration of adenosylhomocysteine.</text>
</comment>
<comment type="catalytic activity">
    <reaction evidence="1">
        <text>S-adenosyl-L-homocysteine + H2O = L-homocysteine + adenosine</text>
        <dbReference type="Rhea" id="RHEA:21708"/>
        <dbReference type="ChEBI" id="CHEBI:15377"/>
        <dbReference type="ChEBI" id="CHEBI:16335"/>
        <dbReference type="ChEBI" id="CHEBI:57856"/>
        <dbReference type="ChEBI" id="CHEBI:58199"/>
        <dbReference type="EC" id="3.13.2.1"/>
    </reaction>
</comment>
<comment type="cofactor">
    <cofactor evidence="1">
        <name>NAD(+)</name>
        <dbReference type="ChEBI" id="CHEBI:57540"/>
    </cofactor>
    <text evidence="1">Binds 1 NAD(+) per subunit.</text>
</comment>
<comment type="pathway">
    <text evidence="1">Amino-acid biosynthesis; L-homocysteine biosynthesis; L-homocysteine from S-adenosyl-L-homocysteine: step 1/1.</text>
</comment>
<comment type="subcellular location">
    <subcellularLocation>
        <location evidence="1">Cytoplasm</location>
    </subcellularLocation>
</comment>
<comment type="similarity">
    <text evidence="1">Belongs to the adenosylhomocysteinase family.</text>
</comment>
<reference key="1">
    <citation type="journal article" date="2006" name="Proc. Natl. Acad. Sci. U.S.A.">
        <title>The partitioned Rhizobium etli genome: genetic and metabolic redundancy in seven interacting replicons.</title>
        <authorList>
            <person name="Gonzalez V."/>
            <person name="Santamaria R.I."/>
            <person name="Bustos P."/>
            <person name="Hernandez-Gonzalez I."/>
            <person name="Medrano-Soto A."/>
            <person name="Moreno-Hagelsieb G."/>
            <person name="Janga S.C."/>
            <person name="Ramirez M.A."/>
            <person name="Jimenez-Jacinto V."/>
            <person name="Collado-Vides J."/>
            <person name="Davila G."/>
        </authorList>
    </citation>
    <scope>NUCLEOTIDE SEQUENCE [LARGE SCALE GENOMIC DNA]</scope>
    <source>
        <strain>ATCC 51251 / DSM 11541 / JCM 21823 / NBRC 15573 / CFN 42</strain>
    </source>
</reference>